<reference key="1">
    <citation type="journal article" date="2010" name="Genome Biol.">
        <title>Structure and dynamics of the pan-genome of Streptococcus pneumoniae and closely related species.</title>
        <authorList>
            <person name="Donati C."/>
            <person name="Hiller N.L."/>
            <person name="Tettelin H."/>
            <person name="Muzzi A."/>
            <person name="Croucher N.J."/>
            <person name="Angiuoli S.V."/>
            <person name="Oggioni M."/>
            <person name="Dunning Hotopp J.C."/>
            <person name="Hu F.Z."/>
            <person name="Riley D.R."/>
            <person name="Covacci A."/>
            <person name="Mitchell T.J."/>
            <person name="Bentley S.D."/>
            <person name="Kilian M."/>
            <person name="Ehrlich G.D."/>
            <person name="Rappuoli R."/>
            <person name="Moxon E.R."/>
            <person name="Masignani V."/>
        </authorList>
    </citation>
    <scope>NUCLEOTIDE SEQUENCE [LARGE SCALE GENOMIC DNA]</scope>
    <source>
        <strain>Hungary19A-6</strain>
    </source>
</reference>
<dbReference type="EMBL" id="CP000936">
    <property type="protein sequence ID" value="ACA35664.1"/>
    <property type="molecule type" value="Genomic_DNA"/>
</dbReference>
<dbReference type="RefSeq" id="WP_001273603.1">
    <property type="nucleotide sequence ID" value="NC_010380.1"/>
</dbReference>
<dbReference type="SMR" id="B1IA81"/>
<dbReference type="KEGG" id="spv:SPH_0654"/>
<dbReference type="HOGENOM" id="CLU_089475_3_0_9"/>
<dbReference type="Proteomes" id="UP000002163">
    <property type="component" value="Chromosome"/>
</dbReference>
<dbReference type="GO" id="GO:0005829">
    <property type="term" value="C:cytosol"/>
    <property type="evidence" value="ECO:0007669"/>
    <property type="project" value="TreeGrafter"/>
</dbReference>
<dbReference type="GO" id="GO:0043024">
    <property type="term" value="F:ribosomal small subunit binding"/>
    <property type="evidence" value="ECO:0007669"/>
    <property type="project" value="TreeGrafter"/>
</dbReference>
<dbReference type="GO" id="GO:0030490">
    <property type="term" value="P:maturation of SSU-rRNA"/>
    <property type="evidence" value="ECO:0007669"/>
    <property type="project" value="UniProtKB-UniRule"/>
</dbReference>
<dbReference type="FunFam" id="3.30.300.20:FF:000012">
    <property type="entry name" value="Ribosome-binding factor A"/>
    <property type="match status" value="1"/>
</dbReference>
<dbReference type="Gene3D" id="3.30.300.20">
    <property type="match status" value="1"/>
</dbReference>
<dbReference type="HAMAP" id="MF_00003">
    <property type="entry name" value="RbfA"/>
    <property type="match status" value="1"/>
</dbReference>
<dbReference type="InterPro" id="IPR015946">
    <property type="entry name" value="KH_dom-like_a/b"/>
</dbReference>
<dbReference type="InterPro" id="IPR000238">
    <property type="entry name" value="RbfA"/>
</dbReference>
<dbReference type="InterPro" id="IPR023799">
    <property type="entry name" value="RbfA_dom_sf"/>
</dbReference>
<dbReference type="InterPro" id="IPR020053">
    <property type="entry name" value="Ribosome-bd_factorA_CS"/>
</dbReference>
<dbReference type="NCBIfam" id="TIGR00082">
    <property type="entry name" value="rbfA"/>
    <property type="match status" value="1"/>
</dbReference>
<dbReference type="PANTHER" id="PTHR33515">
    <property type="entry name" value="RIBOSOME-BINDING FACTOR A, CHLOROPLASTIC-RELATED"/>
    <property type="match status" value="1"/>
</dbReference>
<dbReference type="PANTHER" id="PTHR33515:SF1">
    <property type="entry name" value="RIBOSOME-BINDING FACTOR A, CHLOROPLASTIC-RELATED"/>
    <property type="match status" value="1"/>
</dbReference>
<dbReference type="Pfam" id="PF02033">
    <property type="entry name" value="RBFA"/>
    <property type="match status" value="1"/>
</dbReference>
<dbReference type="SUPFAM" id="SSF89919">
    <property type="entry name" value="Ribosome-binding factor A, RbfA"/>
    <property type="match status" value="1"/>
</dbReference>
<dbReference type="PROSITE" id="PS01319">
    <property type="entry name" value="RBFA"/>
    <property type="match status" value="1"/>
</dbReference>
<gene>
    <name evidence="1" type="primary">rbfA</name>
    <name type="ordered locus">SPH_0654</name>
</gene>
<comment type="function">
    <text evidence="1">One of several proteins that assist in the late maturation steps of the functional core of the 30S ribosomal subunit. Associates with free 30S ribosomal subunits (but not with 30S subunits that are part of 70S ribosomes or polysomes). Required for efficient processing of 16S rRNA. May interact with the 5'-terminal helix region of 16S rRNA.</text>
</comment>
<comment type="subunit">
    <text evidence="1">Monomer. Binds 30S ribosomal subunits, but not 50S ribosomal subunits or 70S ribosomes.</text>
</comment>
<comment type="subcellular location">
    <subcellularLocation>
        <location evidence="1">Cytoplasm</location>
    </subcellularLocation>
</comment>
<comment type="similarity">
    <text evidence="1">Belongs to the RbfA family.</text>
</comment>
<keyword id="KW-0963">Cytoplasm</keyword>
<keyword id="KW-0690">Ribosome biogenesis</keyword>
<sequence>MANHFRTDRVGMEIKREVNEILQKKVRDPRVQGVTITDVQMLGDLSVAKVYYTILSNLASDNQKVQIGLEKATGTIKRELGRNLKLYKIPDLTFVKDESIEYGNKIDEMLRNLDKN</sequence>
<organism>
    <name type="scientific">Streptococcus pneumoniae (strain Hungary19A-6)</name>
    <dbReference type="NCBI Taxonomy" id="487214"/>
    <lineage>
        <taxon>Bacteria</taxon>
        <taxon>Bacillati</taxon>
        <taxon>Bacillota</taxon>
        <taxon>Bacilli</taxon>
        <taxon>Lactobacillales</taxon>
        <taxon>Streptococcaceae</taxon>
        <taxon>Streptococcus</taxon>
    </lineage>
</organism>
<feature type="chain" id="PRO_1000088936" description="Ribosome-binding factor A">
    <location>
        <begin position="1"/>
        <end position="116"/>
    </location>
</feature>
<protein>
    <recommendedName>
        <fullName evidence="1">Ribosome-binding factor A</fullName>
    </recommendedName>
</protein>
<name>RBFA_STRPI</name>
<proteinExistence type="inferred from homology"/>
<evidence type="ECO:0000255" key="1">
    <source>
        <dbReference type="HAMAP-Rule" id="MF_00003"/>
    </source>
</evidence>
<accession>B1IA81</accession>